<reference key="1">
    <citation type="journal article" date="2006" name="Theor. Appl. Genet.">
        <title>Complete chloroplast genome sequences of Solanum bulbocastanum, Solanum lycopersicum and comparative analyses with other Solanaceae genomes.</title>
        <authorList>
            <person name="Daniell H."/>
            <person name="Lee S.-B."/>
            <person name="Grevich J."/>
            <person name="Saski C."/>
            <person name="Quesada-Vargas T."/>
            <person name="Guda C."/>
            <person name="Tomkins J."/>
            <person name="Jansen R.K."/>
        </authorList>
    </citation>
    <scope>NUCLEOTIDE SEQUENCE [LARGE SCALE GENOMIC DNA]</scope>
    <source>
        <strain>cv. LA3023</strain>
    </source>
</reference>
<reference key="2">
    <citation type="journal article" date="2006" name="J. Mol. Evol.">
        <title>Sequence of the tomato chloroplast DNA and evolutionary comparison of solanaceous plastid genomes.</title>
        <authorList>
            <person name="Kahlau S."/>
            <person name="Aspinall S."/>
            <person name="Gray J.C."/>
            <person name="Bock R."/>
        </authorList>
    </citation>
    <scope>NUCLEOTIDE SEQUENCE [LARGE SCALE GENOMIC DNA]</scope>
    <source>
        <strain>cv. IPA-6</strain>
    </source>
</reference>
<gene>
    <name type="primary">rps12-A</name>
</gene>
<gene>
    <name type="primary">rps12-B</name>
</gene>
<protein>
    <recommendedName>
        <fullName evidence="2">Small ribosomal subunit protein uS12cz/uS12cy</fullName>
    </recommendedName>
    <alternativeName>
        <fullName evidence="3">30S ribosomal protein S12, chloroplastic</fullName>
    </alternativeName>
</protein>
<dbReference type="EMBL" id="DQ347959">
    <property type="protein sequence ID" value="ABC56347.1"/>
    <property type="molecule type" value="Genomic_DNA"/>
</dbReference>
<dbReference type="EMBL" id="DQ347959">
    <property type="protein sequence ID" value="ABC56360.1"/>
    <property type="molecule type" value="Genomic_DNA"/>
</dbReference>
<dbReference type="EMBL" id="AM087200">
    <property type="protein sequence ID" value="CAJ32417.1"/>
    <property type="molecule type" value="Genomic_DNA"/>
</dbReference>
<dbReference type="EMBL" id="AM087200">
    <property type="protein sequence ID" value="CAL36992.1"/>
    <property type="molecule type" value="Genomic_DNA"/>
</dbReference>
<dbReference type="RefSeq" id="AP_004907.1">
    <property type="nucleotide sequence ID" value="AC_000188.1"/>
</dbReference>
<dbReference type="RefSeq" id="AP_004952.1">
    <property type="nucleotide sequence ID" value="AC_000188.1"/>
</dbReference>
<dbReference type="SMR" id="Q2MIC2"/>
<dbReference type="FunCoup" id="Q2MIC2">
    <property type="interactions" value="1698"/>
</dbReference>
<dbReference type="STRING" id="4081.Q2MIC2"/>
<dbReference type="PaxDb" id="4081-Solyc03g065050.1.1"/>
<dbReference type="KEGG" id="sly:3950426"/>
<dbReference type="KEGG" id="sly:3950473"/>
<dbReference type="eggNOG" id="KOG1750">
    <property type="taxonomic scope" value="Eukaryota"/>
</dbReference>
<dbReference type="InParanoid" id="Q2MIC2"/>
<dbReference type="OrthoDB" id="414309at2759"/>
<dbReference type="Proteomes" id="UP000004994">
    <property type="component" value="Chloroplast"/>
</dbReference>
<dbReference type="ExpressionAtlas" id="Q2MIC2">
    <property type="expression patterns" value="baseline"/>
</dbReference>
<dbReference type="GO" id="GO:0009507">
    <property type="term" value="C:chloroplast"/>
    <property type="evidence" value="ECO:0007669"/>
    <property type="project" value="UniProtKB-SubCell"/>
</dbReference>
<dbReference type="GO" id="GO:0005840">
    <property type="term" value="C:ribosome"/>
    <property type="evidence" value="ECO:0000318"/>
    <property type="project" value="GO_Central"/>
</dbReference>
<dbReference type="GO" id="GO:0015935">
    <property type="term" value="C:small ribosomal subunit"/>
    <property type="evidence" value="ECO:0007669"/>
    <property type="project" value="InterPro"/>
</dbReference>
<dbReference type="GO" id="GO:0019843">
    <property type="term" value="F:rRNA binding"/>
    <property type="evidence" value="ECO:0007669"/>
    <property type="project" value="UniProtKB-UniRule"/>
</dbReference>
<dbReference type="GO" id="GO:0003735">
    <property type="term" value="F:structural constituent of ribosome"/>
    <property type="evidence" value="ECO:0000318"/>
    <property type="project" value="GO_Central"/>
</dbReference>
<dbReference type="GO" id="GO:0006412">
    <property type="term" value="P:translation"/>
    <property type="evidence" value="ECO:0000318"/>
    <property type="project" value="GO_Central"/>
</dbReference>
<dbReference type="CDD" id="cd03368">
    <property type="entry name" value="Ribosomal_S12"/>
    <property type="match status" value="1"/>
</dbReference>
<dbReference type="FunFam" id="2.40.50.140:FF:000008">
    <property type="entry name" value="30S ribosomal protein S12, chloroplastic"/>
    <property type="match status" value="1"/>
</dbReference>
<dbReference type="Gene3D" id="2.40.50.140">
    <property type="entry name" value="Nucleic acid-binding proteins"/>
    <property type="match status" value="1"/>
</dbReference>
<dbReference type="HAMAP" id="MF_00403_B">
    <property type="entry name" value="Ribosomal_uS12_B"/>
    <property type="match status" value="1"/>
</dbReference>
<dbReference type="InterPro" id="IPR012340">
    <property type="entry name" value="NA-bd_OB-fold"/>
</dbReference>
<dbReference type="InterPro" id="IPR006032">
    <property type="entry name" value="Ribosomal_uS12"/>
</dbReference>
<dbReference type="InterPro" id="IPR005679">
    <property type="entry name" value="Ribosomal_uS12_bac"/>
</dbReference>
<dbReference type="NCBIfam" id="TIGR00981">
    <property type="entry name" value="rpsL_bact"/>
    <property type="match status" value="1"/>
</dbReference>
<dbReference type="PANTHER" id="PTHR11652">
    <property type="entry name" value="30S RIBOSOMAL PROTEIN S12 FAMILY MEMBER"/>
    <property type="match status" value="1"/>
</dbReference>
<dbReference type="Pfam" id="PF00164">
    <property type="entry name" value="Ribosom_S12_S23"/>
    <property type="match status" value="1"/>
</dbReference>
<dbReference type="PIRSF" id="PIRSF002133">
    <property type="entry name" value="Ribosomal_S12/S23"/>
    <property type="match status" value="1"/>
</dbReference>
<dbReference type="PRINTS" id="PR01034">
    <property type="entry name" value="RIBOSOMALS12"/>
</dbReference>
<dbReference type="SUPFAM" id="SSF50249">
    <property type="entry name" value="Nucleic acid-binding proteins"/>
    <property type="match status" value="1"/>
</dbReference>
<dbReference type="PROSITE" id="PS00055">
    <property type="entry name" value="RIBOSOMAL_S12"/>
    <property type="match status" value="1"/>
</dbReference>
<accession>Q2MIC2</accession>
<evidence type="ECO:0000250" key="1"/>
<evidence type="ECO:0000255" key="2">
    <source>
        <dbReference type="HAMAP-Rule" id="MF_00403"/>
    </source>
</evidence>
<evidence type="ECO:0000305" key="3"/>
<organism>
    <name type="scientific">Solanum lycopersicum</name>
    <name type="common">Tomato</name>
    <name type="synonym">Lycopersicon esculentum</name>
    <dbReference type="NCBI Taxonomy" id="4081"/>
    <lineage>
        <taxon>Eukaryota</taxon>
        <taxon>Viridiplantae</taxon>
        <taxon>Streptophyta</taxon>
        <taxon>Embryophyta</taxon>
        <taxon>Tracheophyta</taxon>
        <taxon>Spermatophyta</taxon>
        <taxon>Magnoliopsida</taxon>
        <taxon>eudicotyledons</taxon>
        <taxon>Gunneridae</taxon>
        <taxon>Pentapetalae</taxon>
        <taxon>asterids</taxon>
        <taxon>lamiids</taxon>
        <taxon>Solanales</taxon>
        <taxon>Solanaceae</taxon>
        <taxon>Solanoideae</taxon>
        <taxon>Solaneae</taxon>
        <taxon>Solanum</taxon>
        <taxon>Solanum subgen. Lycopersicon</taxon>
    </lineage>
</organism>
<keyword id="KW-0150">Chloroplast</keyword>
<keyword id="KW-0934">Plastid</keyword>
<keyword id="KW-1185">Reference proteome</keyword>
<keyword id="KW-0687">Ribonucleoprotein</keyword>
<keyword id="KW-0689">Ribosomal protein</keyword>
<keyword id="KW-0694">RNA-binding</keyword>
<keyword id="KW-0699">rRNA-binding</keyword>
<geneLocation type="chloroplast"/>
<feature type="chain" id="PRO_0000276630" description="Small ribosomal subunit protein uS12cz/uS12cy">
    <location>
        <begin position="1"/>
        <end position="123"/>
    </location>
</feature>
<proteinExistence type="inferred from homology"/>
<comment type="function">
    <text evidence="1">With S4 and S5 plays an important role in translational accuracy. Located at the interface of the 30S and 50S subunits (By similarity).</text>
</comment>
<comment type="subunit">
    <text evidence="1">Part of the 30S ribosomal subunit.</text>
</comment>
<comment type="subcellular location">
    <subcellularLocation>
        <location>Plastid</location>
        <location>Chloroplast</location>
    </subcellularLocation>
</comment>
<comment type="similarity">
    <text evidence="3">Belongs to the universal ribosomal protein uS12 family.</text>
</comment>
<name>RR12_SOLLC</name>
<sequence length="123" mass="13738">MPTIKQLIRNTRQPIRNVTKSPALRGCPQRRGTCTRVYTITPKKPNSALRKVARVRLTSGFEITAYIPGIGHNSQEHSVVLVRGGRVKDLPGVRYHIVRGTLDAVGVKDRQQGRSKYGVKKPK</sequence>